<organism>
    <name type="scientific">Trichodesmium erythraeum (strain IMS101)</name>
    <dbReference type="NCBI Taxonomy" id="203124"/>
    <lineage>
        <taxon>Bacteria</taxon>
        <taxon>Bacillati</taxon>
        <taxon>Cyanobacteriota</taxon>
        <taxon>Cyanophyceae</taxon>
        <taxon>Oscillatoriophycideae</taxon>
        <taxon>Oscillatoriales</taxon>
        <taxon>Microcoleaceae</taxon>
        <taxon>Trichodesmium</taxon>
    </lineage>
</organism>
<name>ARGB_TRIEI</name>
<proteinExistence type="inferred from homology"/>
<reference key="1">
    <citation type="journal article" date="2015" name="Proc. Natl. Acad. Sci. U.S.A.">
        <title>Trichodesmium genome maintains abundant, widespread noncoding DNA in situ, despite oligotrophic lifestyle.</title>
        <authorList>
            <person name="Walworth N."/>
            <person name="Pfreundt U."/>
            <person name="Nelson W.C."/>
            <person name="Mincer T."/>
            <person name="Heidelberg J.F."/>
            <person name="Fu F."/>
            <person name="Waterbury J.B."/>
            <person name="Glavina del Rio T."/>
            <person name="Goodwin L."/>
            <person name="Kyrpides N.C."/>
            <person name="Land M.L."/>
            <person name="Woyke T."/>
            <person name="Hutchins D.A."/>
            <person name="Hess W.R."/>
            <person name="Webb E.A."/>
        </authorList>
    </citation>
    <scope>NUCLEOTIDE SEQUENCE [LARGE SCALE GENOMIC DNA]</scope>
    <source>
        <strain>IMS101</strain>
    </source>
</reference>
<accession>Q116Q9</accession>
<feature type="chain" id="PRO_0000264783" description="Acetylglutamate kinase">
    <location>
        <begin position="1"/>
        <end position="292"/>
    </location>
</feature>
<feature type="binding site" evidence="1">
    <location>
        <begin position="72"/>
        <end position="73"/>
    </location>
    <ligand>
        <name>substrate</name>
    </ligand>
</feature>
<feature type="binding site" evidence="1">
    <location>
        <position position="94"/>
    </location>
    <ligand>
        <name>substrate</name>
    </ligand>
</feature>
<feature type="binding site" evidence="1">
    <location>
        <position position="187"/>
    </location>
    <ligand>
        <name>substrate</name>
    </ligand>
</feature>
<feature type="site" description="Transition state stabilizer" evidence="1">
    <location>
        <position position="37"/>
    </location>
</feature>
<feature type="site" description="Transition state stabilizer" evidence="1">
    <location>
        <position position="250"/>
    </location>
</feature>
<sequence>MLKSTDLKNESEMSRVKVLSEALPYIQKFTGRKIVVKYGGAAMRDSNVKDQVMRDIVLLSCVGIRPIVVHGGGPEINSWLGKLGIEPQFKDGLRVTDASTMEVVEMVLVGKVNKEIVSLINQAGGCAVGLCGKDASLIQARPEGIEGIGFVGEVSNVKIDILQSLVDNGYIPVVSSVATDEQGQAYNLNADTVAGEIAAAMEAEKLILLTDTAGILEDYHNPDSLIVKLDIQEARELIEKGIVSGGMIPKVNCCVRSLAQGVRAAHILDGRVPHVLLQEILTDTGVGSMIVA</sequence>
<gene>
    <name evidence="1" type="primary">argB</name>
    <name type="ordered locus">Tery_1153</name>
</gene>
<keyword id="KW-0028">Amino-acid biosynthesis</keyword>
<keyword id="KW-0055">Arginine biosynthesis</keyword>
<keyword id="KW-0067">ATP-binding</keyword>
<keyword id="KW-0963">Cytoplasm</keyword>
<keyword id="KW-0418">Kinase</keyword>
<keyword id="KW-0547">Nucleotide-binding</keyword>
<keyword id="KW-0808">Transferase</keyword>
<comment type="function">
    <text evidence="1">Catalyzes the ATP-dependent phosphorylation of N-acetyl-L-glutamate.</text>
</comment>
<comment type="catalytic activity">
    <reaction evidence="1">
        <text>N-acetyl-L-glutamate + ATP = N-acetyl-L-glutamyl 5-phosphate + ADP</text>
        <dbReference type="Rhea" id="RHEA:14629"/>
        <dbReference type="ChEBI" id="CHEBI:30616"/>
        <dbReference type="ChEBI" id="CHEBI:44337"/>
        <dbReference type="ChEBI" id="CHEBI:57936"/>
        <dbReference type="ChEBI" id="CHEBI:456216"/>
        <dbReference type="EC" id="2.7.2.8"/>
    </reaction>
</comment>
<comment type="pathway">
    <text evidence="1">Amino-acid biosynthesis; L-arginine biosynthesis; N(2)-acetyl-L-ornithine from L-glutamate: step 2/4.</text>
</comment>
<comment type="subcellular location">
    <subcellularLocation>
        <location evidence="1">Cytoplasm</location>
    </subcellularLocation>
</comment>
<comment type="similarity">
    <text evidence="1">Belongs to the acetylglutamate kinase family. ArgB subfamily.</text>
</comment>
<protein>
    <recommendedName>
        <fullName evidence="1">Acetylglutamate kinase</fullName>
        <ecNumber evidence="1">2.7.2.8</ecNumber>
    </recommendedName>
    <alternativeName>
        <fullName evidence="1">N-acetyl-L-glutamate 5-phosphotransferase</fullName>
    </alternativeName>
    <alternativeName>
        <fullName evidence="1">NAG kinase</fullName>
        <shortName evidence="1">NAGK</shortName>
    </alternativeName>
</protein>
<evidence type="ECO:0000255" key="1">
    <source>
        <dbReference type="HAMAP-Rule" id="MF_00082"/>
    </source>
</evidence>
<dbReference type="EC" id="2.7.2.8" evidence="1"/>
<dbReference type="EMBL" id="CP000393">
    <property type="protein sequence ID" value="ABG50515.1"/>
    <property type="molecule type" value="Genomic_DNA"/>
</dbReference>
<dbReference type="RefSeq" id="WP_011610901.1">
    <property type="nucleotide sequence ID" value="NC_008312.1"/>
</dbReference>
<dbReference type="SMR" id="Q116Q9"/>
<dbReference type="STRING" id="203124.Tery_1153"/>
<dbReference type="KEGG" id="ter:Tery_1153"/>
<dbReference type="eggNOG" id="COG0548">
    <property type="taxonomic scope" value="Bacteria"/>
</dbReference>
<dbReference type="HOGENOM" id="CLU_053680_0_0_3"/>
<dbReference type="OrthoDB" id="9803155at2"/>
<dbReference type="UniPathway" id="UPA00068">
    <property type="reaction ID" value="UER00107"/>
</dbReference>
<dbReference type="GO" id="GO:0005737">
    <property type="term" value="C:cytoplasm"/>
    <property type="evidence" value="ECO:0007669"/>
    <property type="project" value="UniProtKB-SubCell"/>
</dbReference>
<dbReference type="GO" id="GO:0003991">
    <property type="term" value="F:acetylglutamate kinase activity"/>
    <property type="evidence" value="ECO:0007669"/>
    <property type="project" value="UniProtKB-UniRule"/>
</dbReference>
<dbReference type="GO" id="GO:0005524">
    <property type="term" value="F:ATP binding"/>
    <property type="evidence" value="ECO:0007669"/>
    <property type="project" value="UniProtKB-UniRule"/>
</dbReference>
<dbReference type="GO" id="GO:0042450">
    <property type="term" value="P:arginine biosynthetic process via ornithine"/>
    <property type="evidence" value="ECO:0007669"/>
    <property type="project" value="UniProtKB-UniRule"/>
</dbReference>
<dbReference type="GO" id="GO:0006526">
    <property type="term" value="P:L-arginine biosynthetic process"/>
    <property type="evidence" value="ECO:0007669"/>
    <property type="project" value="UniProtKB-UniPathway"/>
</dbReference>
<dbReference type="CDD" id="cd04250">
    <property type="entry name" value="AAK_NAGK-C"/>
    <property type="match status" value="1"/>
</dbReference>
<dbReference type="FunFam" id="3.40.1160.10:FF:000004">
    <property type="entry name" value="Acetylglutamate kinase"/>
    <property type="match status" value="1"/>
</dbReference>
<dbReference type="Gene3D" id="3.40.1160.10">
    <property type="entry name" value="Acetylglutamate kinase-like"/>
    <property type="match status" value="1"/>
</dbReference>
<dbReference type="HAMAP" id="MF_00082">
    <property type="entry name" value="ArgB"/>
    <property type="match status" value="1"/>
</dbReference>
<dbReference type="InterPro" id="IPR036393">
    <property type="entry name" value="AceGlu_kinase-like_sf"/>
</dbReference>
<dbReference type="InterPro" id="IPR004662">
    <property type="entry name" value="AcgluKinase_fam"/>
</dbReference>
<dbReference type="InterPro" id="IPR037528">
    <property type="entry name" value="ArgB"/>
</dbReference>
<dbReference type="InterPro" id="IPR001048">
    <property type="entry name" value="Asp/Glu/Uridylate_kinase"/>
</dbReference>
<dbReference type="InterPro" id="IPR001057">
    <property type="entry name" value="Glu/AcGlu_kinase"/>
</dbReference>
<dbReference type="InterPro" id="IPR041727">
    <property type="entry name" value="NAGK-C"/>
</dbReference>
<dbReference type="NCBIfam" id="TIGR00761">
    <property type="entry name" value="argB"/>
    <property type="match status" value="1"/>
</dbReference>
<dbReference type="PANTHER" id="PTHR23342">
    <property type="entry name" value="N-ACETYLGLUTAMATE SYNTHASE"/>
    <property type="match status" value="1"/>
</dbReference>
<dbReference type="PANTHER" id="PTHR23342:SF0">
    <property type="entry name" value="N-ACETYLGLUTAMATE SYNTHASE, MITOCHONDRIAL"/>
    <property type="match status" value="1"/>
</dbReference>
<dbReference type="Pfam" id="PF00696">
    <property type="entry name" value="AA_kinase"/>
    <property type="match status" value="1"/>
</dbReference>
<dbReference type="PIRSF" id="PIRSF000728">
    <property type="entry name" value="NAGK"/>
    <property type="match status" value="1"/>
</dbReference>
<dbReference type="PRINTS" id="PR00474">
    <property type="entry name" value="GLU5KINASE"/>
</dbReference>
<dbReference type="SUPFAM" id="SSF53633">
    <property type="entry name" value="Carbamate kinase-like"/>
    <property type="match status" value="1"/>
</dbReference>